<protein>
    <recommendedName>
        <fullName evidence="1">Nucleotide-binding protein A9601_05361</fullName>
    </recommendedName>
</protein>
<sequence length="165" mass="18871">MAESFSFDVVSDFDRQELVNTLDQVKREISQRYDLKGTDTSVELDKENIFIITNSELTLNAVNDIIRQKAIKRNLSLKIFDYGETEMVSGNRIKQTILLKQGIKQEIAKKISKNIRDQIKKINVSINGETLRVASKSKNDLQLAIKLVSELEESLNIPLKANNFR</sequence>
<feature type="chain" id="PRO_1000147319" description="Nucleotide-binding protein A9601_05361">
    <location>
        <begin position="1"/>
        <end position="165"/>
    </location>
</feature>
<comment type="function">
    <text evidence="1">Nucleotide-binding protein.</text>
</comment>
<comment type="similarity">
    <text evidence="1">Belongs to the YajQ family.</text>
</comment>
<proteinExistence type="inferred from homology"/>
<accession>A2BPW3</accession>
<reference key="1">
    <citation type="journal article" date="2007" name="PLoS Genet.">
        <title>Patterns and implications of gene gain and loss in the evolution of Prochlorococcus.</title>
        <authorList>
            <person name="Kettler G.C."/>
            <person name="Martiny A.C."/>
            <person name="Huang K."/>
            <person name="Zucker J."/>
            <person name="Coleman M.L."/>
            <person name="Rodrigue S."/>
            <person name="Chen F."/>
            <person name="Lapidus A."/>
            <person name="Ferriera S."/>
            <person name="Johnson J."/>
            <person name="Steglich C."/>
            <person name="Church G.M."/>
            <person name="Richardson P."/>
            <person name="Chisholm S.W."/>
        </authorList>
    </citation>
    <scope>NUCLEOTIDE SEQUENCE [LARGE SCALE GENOMIC DNA]</scope>
    <source>
        <strain>AS9601</strain>
    </source>
</reference>
<gene>
    <name type="ordered locus">A9601_05361</name>
</gene>
<dbReference type="EMBL" id="CP000551">
    <property type="protein sequence ID" value="ABM69824.1"/>
    <property type="molecule type" value="Genomic_DNA"/>
</dbReference>
<dbReference type="RefSeq" id="WP_011817990.1">
    <property type="nucleotide sequence ID" value="NC_008816.1"/>
</dbReference>
<dbReference type="SMR" id="A2BPW3"/>
<dbReference type="STRING" id="146891.A9601_05361"/>
<dbReference type="KEGG" id="pmb:A9601_05361"/>
<dbReference type="eggNOG" id="COG1666">
    <property type="taxonomic scope" value="Bacteria"/>
</dbReference>
<dbReference type="HOGENOM" id="CLU_099839_0_0_3"/>
<dbReference type="OrthoDB" id="9801447at2"/>
<dbReference type="Proteomes" id="UP000002590">
    <property type="component" value="Chromosome"/>
</dbReference>
<dbReference type="GO" id="GO:0005829">
    <property type="term" value="C:cytosol"/>
    <property type="evidence" value="ECO:0007669"/>
    <property type="project" value="TreeGrafter"/>
</dbReference>
<dbReference type="GO" id="GO:0000166">
    <property type="term" value="F:nucleotide binding"/>
    <property type="evidence" value="ECO:0007669"/>
    <property type="project" value="TreeGrafter"/>
</dbReference>
<dbReference type="CDD" id="cd11740">
    <property type="entry name" value="YajQ_like"/>
    <property type="match status" value="1"/>
</dbReference>
<dbReference type="Gene3D" id="3.30.70.860">
    <property type="match status" value="1"/>
</dbReference>
<dbReference type="Gene3D" id="3.30.70.990">
    <property type="entry name" value="YajQ-like, domain 2"/>
    <property type="match status" value="1"/>
</dbReference>
<dbReference type="HAMAP" id="MF_00632">
    <property type="entry name" value="YajQ"/>
    <property type="match status" value="1"/>
</dbReference>
<dbReference type="InterPro" id="IPR007551">
    <property type="entry name" value="DUF520"/>
</dbReference>
<dbReference type="InterPro" id="IPR035571">
    <property type="entry name" value="UPF0234-like_C"/>
</dbReference>
<dbReference type="InterPro" id="IPR035570">
    <property type="entry name" value="UPF0234_N"/>
</dbReference>
<dbReference type="InterPro" id="IPR036183">
    <property type="entry name" value="YajQ-like_sf"/>
</dbReference>
<dbReference type="NCBIfam" id="NF003819">
    <property type="entry name" value="PRK05412.1"/>
    <property type="match status" value="1"/>
</dbReference>
<dbReference type="PANTHER" id="PTHR30476">
    <property type="entry name" value="UPF0234 PROTEIN YAJQ"/>
    <property type="match status" value="1"/>
</dbReference>
<dbReference type="PANTHER" id="PTHR30476:SF0">
    <property type="entry name" value="UPF0234 PROTEIN YAJQ"/>
    <property type="match status" value="1"/>
</dbReference>
<dbReference type="Pfam" id="PF04461">
    <property type="entry name" value="DUF520"/>
    <property type="match status" value="1"/>
</dbReference>
<dbReference type="SUPFAM" id="SSF89963">
    <property type="entry name" value="YajQ-like"/>
    <property type="match status" value="2"/>
</dbReference>
<keyword id="KW-0547">Nucleotide-binding</keyword>
<evidence type="ECO:0000255" key="1">
    <source>
        <dbReference type="HAMAP-Rule" id="MF_00632"/>
    </source>
</evidence>
<organism>
    <name type="scientific">Prochlorococcus marinus (strain AS9601)</name>
    <dbReference type="NCBI Taxonomy" id="146891"/>
    <lineage>
        <taxon>Bacteria</taxon>
        <taxon>Bacillati</taxon>
        <taxon>Cyanobacteriota</taxon>
        <taxon>Cyanophyceae</taxon>
        <taxon>Synechococcales</taxon>
        <taxon>Prochlorococcaceae</taxon>
        <taxon>Prochlorococcus</taxon>
    </lineage>
</organism>
<name>Y536_PROMS</name>